<organism>
    <name type="scientific">Staphylococcus aureus (strain COL)</name>
    <dbReference type="NCBI Taxonomy" id="93062"/>
    <lineage>
        <taxon>Bacteria</taxon>
        <taxon>Bacillati</taxon>
        <taxon>Bacillota</taxon>
        <taxon>Bacilli</taxon>
        <taxon>Bacillales</taxon>
        <taxon>Staphylococcaceae</taxon>
        <taxon>Staphylococcus</taxon>
    </lineage>
</organism>
<comment type="function">
    <text evidence="1">Involved in the regulation of virulence genes. Acts as a repressor of the agr locus and consequently targets genes regulated by the agr system such as sspA, hla and hlb. Binds directly to the agr promoter region (By similarity).</text>
</comment>
<comment type="subcellular location">
    <subcellularLocation>
        <location evidence="1">Cytoplasm</location>
    </subcellularLocation>
</comment>
<comment type="similarity">
    <text evidence="3">Belongs to the SarA family.</text>
</comment>
<comment type="sequence caution" evidence="3">
    <conflict type="erroneous initiation">
        <sequence resource="EMBL-CDS" id="AAW37789"/>
    </conflict>
</comment>
<sequence length="119" mass="14179">MNTEKLETLLGFYKQYKALSEYIDKKYKLSLNDLAVLDLTMKHCKDEKVLMQSFLKTAMDELDLSRTKLLVSIRRLIEKERLSKVRSSKDERKIYIYLNNDDISKFNALFEDVEQFLNI</sequence>
<evidence type="ECO:0000250" key="1"/>
<evidence type="ECO:0000255" key="2"/>
<evidence type="ECO:0000305" key="3"/>
<gene>
    <name type="primary">sarX</name>
    <name type="ordered locus">SACOL0726</name>
</gene>
<keyword id="KW-0963">Cytoplasm</keyword>
<keyword id="KW-0238">DNA-binding</keyword>
<keyword id="KW-0678">Repressor</keyword>
<keyword id="KW-0804">Transcription</keyword>
<keyword id="KW-0805">Transcription regulation</keyword>
<keyword id="KW-0843">Virulence</keyword>
<accession>Q5HI00</accession>
<dbReference type="EMBL" id="CP000046">
    <property type="protein sequence ID" value="AAW37789.1"/>
    <property type="status" value="ALT_INIT"/>
    <property type="molecule type" value="Genomic_DNA"/>
</dbReference>
<dbReference type="RefSeq" id="WP_001090985.1">
    <property type="nucleotide sequence ID" value="NZ_JBGOFO010000005.1"/>
</dbReference>
<dbReference type="SMR" id="Q5HI00"/>
<dbReference type="KEGG" id="sac:SACOL0726"/>
<dbReference type="HOGENOM" id="CLU_166896_0_0_9"/>
<dbReference type="Proteomes" id="UP000000530">
    <property type="component" value="Chromosome"/>
</dbReference>
<dbReference type="GO" id="GO:0005737">
    <property type="term" value="C:cytoplasm"/>
    <property type="evidence" value="ECO:0007669"/>
    <property type="project" value="UniProtKB-SubCell"/>
</dbReference>
<dbReference type="GO" id="GO:0003677">
    <property type="term" value="F:DNA binding"/>
    <property type="evidence" value="ECO:0007669"/>
    <property type="project" value="UniProtKB-KW"/>
</dbReference>
<dbReference type="GO" id="GO:0006355">
    <property type="term" value="P:regulation of DNA-templated transcription"/>
    <property type="evidence" value="ECO:0007669"/>
    <property type="project" value="InterPro"/>
</dbReference>
<dbReference type="Gene3D" id="1.10.10.10">
    <property type="entry name" value="Winged helix-like DNA-binding domain superfamily/Winged helix DNA-binding domain"/>
    <property type="match status" value="1"/>
</dbReference>
<dbReference type="InterPro" id="IPR010166">
    <property type="entry name" value="SarA/Rot_dom"/>
</dbReference>
<dbReference type="InterPro" id="IPR055166">
    <property type="entry name" value="Transc_reg_Sar_Rot_HTH"/>
</dbReference>
<dbReference type="InterPro" id="IPR036388">
    <property type="entry name" value="WH-like_DNA-bd_sf"/>
</dbReference>
<dbReference type="InterPro" id="IPR036390">
    <property type="entry name" value="WH_DNA-bd_sf"/>
</dbReference>
<dbReference type="NCBIfam" id="TIGR01889">
    <property type="entry name" value="Staph_reg_Sar"/>
    <property type="match status" value="1"/>
</dbReference>
<dbReference type="Pfam" id="PF22381">
    <property type="entry name" value="Staph_reg_Sar_Rot"/>
    <property type="match status" value="1"/>
</dbReference>
<dbReference type="SUPFAM" id="SSF46785">
    <property type="entry name" value="Winged helix' DNA-binding domain"/>
    <property type="match status" value="1"/>
</dbReference>
<name>SARX_STAAC</name>
<protein>
    <recommendedName>
        <fullName>HTH-type transcriptional regulator SarX</fullName>
    </recommendedName>
    <alternativeName>
        <fullName>Staphylococcal accessory regulator X</fullName>
    </alternativeName>
</protein>
<feature type="chain" id="PRO_0000259139" description="HTH-type transcriptional regulator SarX">
    <location>
        <begin position="1"/>
        <end position="119"/>
    </location>
</feature>
<feature type="DNA-binding region" description="H-T-H motif" evidence="2">
    <location>
        <begin position="55"/>
        <end position="78"/>
    </location>
</feature>
<proteinExistence type="inferred from homology"/>
<reference key="1">
    <citation type="journal article" date="2005" name="J. Bacteriol.">
        <title>Insights on evolution of virulence and resistance from the complete genome analysis of an early methicillin-resistant Staphylococcus aureus strain and a biofilm-producing methicillin-resistant Staphylococcus epidermidis strain.</title>
        <authorList>
            <person name="Gill S.R."/>
            <person name="Fouts D.E."/>
            <person name="Archer G.L."/>
            <person name="Mongodin E.F."/>
            <person name="DeBoy R.T."/>
            <person name="Ravel J."/>
            <person name="Paulsen I.T."/>
            <person name="Kolonay J.F."/>
            <person name="Brinkac L.M."/>
            <person name="Beanan M.J."/>
            <person name="Dodson R.J."/>
            <person name="Daugherty S.C."/>
            <person name="Madupu R."/>
            <person name="Angiuoli S.V."/>
            <person name="Durkin A.S."/>
            <person name="Haft D.H."/>
            <person name="Vamathevan J.J."/>
            <person name="Khouri H."/>
            <person name="Utterback T.R."/>
            <person name="Lee C."/>
            <person name="Dimitrov G."/>
            <person name="Jiang L."/>
            <person name="Qin H."/>
            <person name="Weidman J."/>
            <person name="Tran K."/>
            <person name="Kang K.H."/>
            <person name="Hance I.R."/>
            <person name="Nelson K.E."/>
            <person name="Fraser C.M."/>
        </authorList>
    </citation>
    <scope>NUCLEOTIDE SEQUENCE [LARGE SCALE GENOMIC DNA]</scope>
    <source>
        <strain>COL</strain>
    </source>
</reference>